<proteinExistence type="evidence at protein level"/>
<comment type="function">
    <text evidence="4">Acidic peptide with potent hemolytic activities (94.8% at 50 uM). It also shows low antimicrobial activities against E.coli (MIC=50uM), as well as histamine-releasing activity (28.3% at 10 uM). Does not have activity against S.aureus, and S.cerevisiae.</text>
</comment>
<comment type="subcellular location">
    <subcellularLocation>
        <location evidence="3">Secreted</location>
    </subcellularLocation>
</comment>
<comment type="tissue specificity">
    <text evidence="7">Expressed by the venom gland.</text>
</comment>
<comment type="PTM">
    <text evidence="8">Truncated sequences of this peptide have also been found in the venom. It is possible they have been cleaved in the venom.</text>
</comment>
<comment type="mass spectrometry">
    <text>Monoisotopic mass.</text>
</comment>
<comment type="similarity">
    <text evidence="6">Belongs to the formicidae venom precursor-01 superfamily.</text>
</comment>
<feature type="signal peptide" evidence="2">
    <location>
        <begin position="1"/>
        <end position="23"/>
    </location>
</feature>
<feature type="propeptide" id="PRO_0000447078" evidence="7">
    <location>
        <begin position="24"/>
        <end position="41"/>
    </location>
</feature>
<feature type="peptide" id="PRO_5016715903" description="U-poneritoxin(01)-Om5a" evidence="3 4">
    <location>
        <begin position="42"/>
        <end position="59"/>
    </location>
</feature>
<feature type="modified residue" description="Glutamine amide" evidence="3">
    <location>
        <position position="59"/>
    </location>
</feature>
<dbReference type="EMBL" id="FX985498">
    <property type="protein sequence ID" value="BBF97834.1"/>
    <property type="molecule type" value="mRNA"/>
</dbReference>
<dbReference type="GO" id="GO:0005576">
    <property type="term" value="C:extracellular region"/>
    <property type="evidence" value="ECO:0007669"/>
    <property type="project" value="UniProtKB-SubCell"/>
</dbReference>
<dbReference type="GO" id="GO:0031640">
    <property type="term" value="P:killing of cells of another organism"/>
    <property type="evidence" value="ECO:0007669"/>
    <property type="project" value="UniProtKB-KW"/>
</dbReference>
<dbReference type="InterPro" id="IPR049518">
    <property type="entry name" value="Pilosulin"/>
</dbReference>
<dbReference type="Pfam" id="PF17499">
    <property type="entry name" value="Pilosulin"/>
    <property type="match status" value="1"/>
</dbReference>
<evidence type="ECO:0000250" key="1">
    <source>
        <dbReference type="UniProtKB" id="A0A348G5W2"/>
    </source>
</evidence>
<evidence type="ECO:0000255" key="2"/>
<evidence type="ECO:0000269" key="3">
    <source>
    </source>
</evidence>
<evidence type="ECO:0000269" key="4">
    <source>
    </source>
</evidence>
<evidence type="ECO:0000303" key="5">
    <source>
    </source>
</evidence>
<evidence type="ECO:0000305" key="6"/>
<evidence type="ECO:0000305" key="7">
    <source>
    </source>
</evidence>
<evidence type="ECO:0000305" key="8">
    <source>
    </source>
</evidence>
<evidence type="ECO:0000312" key="9">
    <source>
        <dbReference type="EMBL" id="BBF97834.1"/>
    </source>
</evidence>
<name>TX15A_ODOMO</name>
<accession>A0A348G5W1</accession>
<keyword id="KW-0027">Amidation</keyword>
<keyword id="KW-0204">Cytolysis</keyword>
<keyword id="KW-0354">Hemolysis</keyword>
<keyword id="KW-0964">Secreted</keyword>
<keyword id="KW-0732">Signal</keyword>
<sequence>MKLSALSLAFAIILMMTIMYTKADADASADAEADADAEAEAIWGALLGTLIPAITSAIQGK</sequence>
<protein>
    <recommendedName>
        <fullName evidence="1">U-poneritoxin(01)-Om5a</fullName>
        <shortName evidence="1">U-PONTX(01)-Om5a</shortName>
    </recommendedName>
    <alternativeName>
        <fullName evidence="9">Pilosulin-like peptide 5</fullName>
        <shortName evidence="5">PLP5</shortName>
    </alternativeName>
    <alternativeName>
        <fullName evidence="6">Poneratoxin</fullName>
    </alternativeName>
</protein>
<organism>
    <name type="scientific">Odontomachus monticola</name>
    <name type="common">Trap-jaw ant</name>
    <dbReference type="NCBI Taxonomy" id="613454"/>
    <lineage>
        <taxon>Eukaryota</taxon>
        <taxon>Metazoa</taxon>
        <taxon>Ecdysozoa</taxon>
        <taxon>Arthropoda</taxon>
        <taxon>Hexapoda</taxon>
        <taxon>Insecta</taxon>
        <taxon>Pterygota</taxon>
        <taxon>Neoptera</taxon>
        <taxon>Endopterygota</taxon>
        <taxon>Hymenoptera</taxon>
        <taxon>Apocrita</taxon>
        <taxon>Aculeata</taxon>
        <taxon>Formicoidea</taxon>
        <taxon>Formicidae</taxon>
        <taxon>Ponerinae</taxon>
        <taxon>Ponerini</taxon>
        <taxon>Odontomachus</taxon>
    </lineage>
</organism>
<reference key="1">
    <citation type="journal article" date="2017" name="Toxins">
        <title>Combined venom gland transcriptomic and venom peptidomic analysis of the predatory ant Odontomachus monticola.</title>
        <authorList>
            <person name="Kazuma K."/>
            <person name="Masuko K."/>
            <person name="Konno K."/>
            <person name="Inagaki H."/>
        </authorList>
    </citation>
    <scope>NUCLEOTIDE SEQUENCE [MRNA]</scope>
    <scope>MASS SPECTROMETRY</scope>
    <scope>SUBCELLULAR LOCATION</scope>
    <scope>AMIDATION AT GLN-59</scope>
    <source>
        <tissue>Venom</tissue>
        <tissue>Venom gland</tissue>
    </source>
</reference>
<reference key="2">
    <citation type="journal article" date="2019" name="Toxins">
        <title>Mass spectrometry analysis and biological characterization of the predatory ant Odontomachus monticola venom and venom sac components.</title>
        <authorList>
            <person name="Tani N."/>
            <person name="Kazuma K."/>
            <person name="Ohtsuka Y."/>
            <person name="Shigeri Y."/>
            <person name="Masuko K."/>
            <person name="Konno K."/>
            <person name="Inagaki H."/>
        </authorList>
    </citation>
    <scope>FUNCTION</scope>
    <scope>IDENTIFICATION BY MASS SPECTROMETRY</scope>
    <scope>SYNTHESIS OF PEPTIDE WITH UNKNOWN TERMINAL RESIDUES</scope>
    <scope>SUBCELLULAR LOCATION</scope>
    <source>
        <tissue>Venom</tissue>
    </source>
</reference>